<feature type="chain" id="PRO_1000080576" description="Na(+)-translocating NADH-quinone reductase subunit F">
    <location>
        <begin position="1"/>
        <end position="411"/>
    </location>
</feature>
<feature type="transmembrane region" description="Helical" evidence="1">
    <location>
        <begin position="5"/>
        <end position="25"/>
    </location>
</feature>
<feature type="domain" description="2Fe-2S ferredoxin-type" evidence="1">
    <location>
        <begin position="36"/>
        <end position="130"/>
    </location>
</feature>
<feature type="domain" description="FAD-binding FR-type" evidence="1">
    <location>
        <begin position="133"/>
        <end position="273"/>
    </location>
</feature>
<feature type="binding site" evidence="1">
    <location>
        <position position="73"/>
    </location>
    <ligand>
        <name>[2Fe-2S] cluster</name>
        <dbReference type="ChEBI" id="CHEBI:190135"/>
    </ligand>
</feature>
<feature type="binding site" evidence="1">
    <location>
        <position position="79"/>
    </location>
    <ligand>
        <name>[2Fe-2S] cluster</name>
        <dbReference type="ChEBI" id="CHEBI:190135"/>
    </ligand>
</feature>
<feature type="binding site" evidence="1">
    <location>
        <position position="82"/>
    </location>
    <ligand>
        <name>[2Fe-2S] cluster</name>
        <dbReference type="ChEBI" id="CHEBI:190135"/>
    </ligand>
</feature>
<feature type="binding site" evidence="1">
    <location>
        <position position="114"/>
    </location>
    <ligand>
        <name>[2Fe-2S] cluster</name>
        <dbReference type="ChEBI" id="CHEBI:190135"/>
    </ligand>
</feature>
<proteinExistence type="inferred from homology"/>
<dbReference type="EC" id="7.2.1.1" evidence="1"/>
<dbReference type="EMBL" id="CP000057">
    <property type="protein sequence ID" value="AAX87228.1"/>
    <property type="molecule type" value="Genomic_DNA"/>
</dbReference>
<dbReference type="RefSeq" id="WP_005660831.1">
    <property type="nucleotide sequence ID" value="NC_007146.2"/>
</dbReference>
<dbReference type="SMR" id="Q4QP19"/>
<dbReference type="GeneID" id="93219106"/>
<dbReference type="KEGG" id="hit:NTHI0259"/>
<dbReference type="HOGENOM" id="CLU_003827_7_2_6"/>
<dbReference type="Proteomes" id="UP000002525">
    <property type="component" value="Chromosome"/>
</dbReference>
<dbReference type="GO" id="GO:0005886">
    <property type="term" value="C:plasma membrane"/>
    <property type="evidence" value="ECO:0007669"/>
    <property type="project" value="UniProtKB-SubCell"/>
</dbReference>
<dbReference type="GO" id="GO:0051537">
    <property type="term" value="F:2 iron, 2 sulfur cluster binding"/>
    <property type="evidence" value="ECO:0007669"/>
    <property type="project" value="UniProtKB-KW"/>
</dbReference>
<dbReference type="GO" id="GO:0009055">
    <property type="term" value="F:electron transfer activity"/>
    <property type="evidence" value="ECO:0007669"/>
    <property type="project" value="UniProtKB-UniRule"/>
</dbReference>
<dbReference type="GO" id="GO:0046872">
    <property type="term" value="F:metal ion binding"/>
    <property type="evidence" value="ECO:0007669"/>
    <property type="project" value="UniProtKB-KW"/>
</dbReference>
<dbReference type="GO" id="GO:0016655">
    <property type="term" value="F:oxidoreductase activity, acting on NAD(P)H, quinone or similar compound as acceptor"/>
    <property type="evidence" value="ECO:0007669"/>
    <property type="project" value="InterPro"/>
</dbReference>
<dbReference type="GO" id="GO:0006814">
    <property type="term" value="P:sodium ion transport"/>
    <property type="evidence" value="ECO:0007669"/>
    <property type="project" value="UniProtKB-UniRule"/>
</dbReference>
<dbReference type="CDD" id="cd06188">
    <property type="entry name" value="NADH_quinone_reductase"/>
    <property type="match status" value="1"/>
</dbReference>
<dbReference type="FunFam" id="2.40.30.10:FF:000064">
    <property type="entry name" value="Na(+)-translocating NADH-quinone reductase subunit F"/>
    <property type="match status" value="1"/>
</dbReference>
<dbReference type="FunFam" id="3.40.50.80:FF:000014">
    <property type="entry name" value="Na(+)-translocating NADH-quinone reductase subunit F"/>
    <property type="match status" value="1"/>
</dbReference>
<dbReference type="Gene3D" id="3.10.20.30">
    <property type="match status" value="1"/>
</dbReference>
<dbReference type="Gene3D" id="3.40.50.80">
    <property type="entry name" value="Nucleotide-binding domain of ferredoxin-NADP reductase (FNR) module"/>
    <property type="match status" value="1"/>
</dbReference>
<dbReference type="Gene3D" id="2.40.30.10">
    <property type="entry name" value="Translation factors"/>
    <property type="match status" value="1"/>
</dbReference>
<dbReference type="HAMAP" id="MF_00430">
    <property type="entry name" value="NqrF"/>
    <property type="match status" value="1"/>
</dbReference>
<dbReference type="InterPro" id="IPR036010">
    <property type="entry name" value="2Fe-2S_ferredoxin-like_sf"/>
</dbReference>
<dbReference type="InterPro" id="IPR001041">
    <property type="entry name" value="2Fe-2S_ferredoxin-type"/>
</dbReference>
<dbReference type="InterPro" id="IPR012675">
    <property type="entry name" value="Beta-grasp_dom_sf"/>
</dbReference>
<dbReference type="InterPro" id="IPR008333">
    <property type="entry name" value="Cbr1-like_FAD-bd_dom"/>
</dbReference>
<dbReference type="InterPro" id="IPR017927">
    <property type="entry name" value="FAD-bd_FR_type"/>
</dbReference>
<dbReference type="InterPro" id="IPR001709">
    <property type="entry name" value="Flavoprot_Pyr_Nucl_cyt_Rdtase"/>
</dbReference>
<dbReference type="InterPro" id="IPR039261">
    <property type="entry name" value="FNR_nucleotide-bd"/>
</dbReference>
<dbReference type="InterPro" id="IPR010205">
    <property type="entry name" value="NqrF"/>
</dbReference>
<dbReference type="InterPro" id="IPR001433">
    <property type="entry name" value="OxRdtase_FAD/NAD-bd"/>
</dbReference>
<dbReference type="InterPro" id="IPR017938">
    <property type="entry name" value="Riboflavin_synthase-like_b-brl"/>
</dbReference>
<dbReference type="NCBIfam" id="TIGR01941">
    <property type="entry name" value="nqrF"/>
    <property type="match status" value="1"/>
</dbReference>
<dbReference type="PANTHER" id="PTHR43644">
    <property type="entry name" value="NA(+)-TRANSLOCATING NADH-QUINONE REDUCTASE SUBUNIT"/>
    <property type="match status" value="1"/>
</dbReference>
<dbReference type="PANTHER" id="PTHR43644:SF1">
    <property type="entry name" value="NAD(P)H-FLAVIN REDUCTASE"/>
    <property type="match status" value="1"/>
</dbReference>
<dbReference type="Pfam" id="PF00970">
    <property type="entry name" value="FAD_binding_6"/>
    <property type="match status" value="1"/>
</dbReference>
<dbReference type="Pfam" id="PF00111">
    <property type="entry name" value="Fer2"/>
    <property type="match status" value="1"/>
</dbReference>
<dbReference type="Pfam" id="PF00175">
    <property type="entry name" value="NAD_binding_1"/>
    <property type="match status" value="1"/>
</dbReference>
<dbReference type="PIRSF" id="PIRSF000044">
    <property type="entry name" value="Cis_Diol_DH_RD"/>
    <property type="match status" value="1"/>
</dbReference>
<dbReference type="PRINTS" id="PR00371">
    <property type="entry name" value="FPNCR"/>
</dbReference>
<dbReference type="SUPFAM" id="SSF54292">
    <property type="entry name" value="2Fe-2S ferredoxin-like"/>
    <property type="match status" value="1"/>
</dbReference>
<dbReference type="SUPFAM" id="SSF52343">
    <property type="entry name" value="Ferredoxin reductase-like, C-terminal NADP-linked domain"/>
    <property type="match status" value="1"/>
</dbReference>
<dbReference type="SUPFAM" id="SSF63380">
    <property type="entry name" value="Riboflavin synthase domain-like"/>
    <property type="match status" value="1"/>
</dbReference>
<dbReference type="PROSITE" id="PS51085">
    <property type="entry name" value="2FE2S_FER_2"/>
    <property type="match status" value="1"/>
</dbReference>
<dbReference type="PROSITE" id="PS51384">
    <property type="entry name" value="FAD_FR"/>
    <property type="match status" value="1"/>
</dbReference>
<gene>
    <name evidence="1" type="primary">nqrF</name>
    <name type="ordered locus">NTHI0259</name>
</gene>
<reference key="1">
    <citation type="journal article" date="2005" name="J. Bacteriol.">
        <title>Genomic sequence of an otitis media isolate of nontypeable Haemophilus influenzae: comparative study with H. influenzae serotype d, strain KW20.</title>
        <authorList>
            <person name="Harrison A."/>
            <person name="Dyer D.W."/>
            <person name="Gillaspy A."/>
            <person name="Ray W.C."/>
            <person name="Mungur R."/>
            <person name="Carson M.B."/>
            <person name="Zhong H."/>
            <person name="Gipson J."/>
            <person name="Gipson M."/>
            <person name="Johnson L.S."/>
            <person name="Lewis L."/>
            <person name="Bakaletz L.O."/>
            <person name="Munson R.S. Jr."/>
        </authorList>
    </citation>
    <scope>NUCLEOTIDE SEQUENCE [LARGE SCALE GENOMIC DNA]</scope>
    <source>
        <strain>86-028NP</strain>
    </source>
</reference>
<sequence length="411" mass="45704">MSDSVILALGIAAFTVIVLVLVAIILFAKSKLVDSGDITIDINDDPEKAITLPAGGKLLGALASKGIFVSSACGGGGSCGQCIVKVKNGGGEILPTELSHINKREAKEGYRLACQVNVKGNMEVELPEEIFGVKKWECTVISNDNKATFIKELKLAIPEGEEVPFRAGGYIQIEAEPHVVNYKDFDIPEEYHEDWDKYDLWRYVSKVDEHIIRAYSMASYPEEKGIIMLNVRIATPPPRQPDAPPGQMSSYIWSLKAGDKVTISGPFGEFFAKETNAEMVFIGGGAGMAPMRSHIFDQLKRLHSKRKMSFWYGARSKREIFYQEDFDQLQAENPNFVWHVALSDALPEDNWTGYTGFIHNVLYENYLKNHEAPEDCEYYMCGPPVMNAAVIKMLKDLGVEDENILLDDFGG</sequence>
<evidence type="ECO:0000255" key="1">
    <source>
        <dbReference type="HAMAP-Rule" id="MF_00430"/>
    </source>
</evidence>
<comment type="function">
    <text evidence="1">NQR complex catalyzes the reduction of ubiquinone-1 to ubiquinol by two successive reactions, coupled with the transport of Na(+) ions from the cytoplasm to the periplasm. The first step is catalyzed by NqrF, which accepts electrons from NADH and reduces ubiquinone-1 to ubisemiquinone by a one-electron transfer pathway.</text>
</comment>
<comment type="catalytic activity">
    <reaction evidence="1">
        <text>a ubiquinone + n Na(+)(in) + NADH + H(+) = a ubiquinol + n Na(+)(out) + NAD(+)</text>
        <dbReference type="Rhea" id="RHEA:47748"/>
        <dbReference type="Rhea" id="RHEA-COMP:9565"/>
        <dbReference type="Rhea" id="RHEA-COMP:9566"/>
        <dbReference type="ChEBI" id="CHEBI:15378"/>
        <dbReference type="ChEBI" id="CHEBI:16389"/>
        <dbReference type="ChEBI" id="CHEBI:17976"/>
        <dbReference type="ChEBI" id="CHEBI:29101"/>
        <dbReference type="ChEBI" id="CHEBI:57540"/>
        <dbReference type="ChEBI" id="CHEBI:57945"/>
        <dbReference type="EC" id="7.2.1.1"/>
    </reaction>
</comment>
<comment type="cofactor">
    <cofactor evidence="1">
        <name>[2Fe-2S] cluster</name>
        <dbReference type="ChEBI" id="CHEBI:190135"/>
    </cofactor>
    <text evidence="1">Binds 1 [2Fe-2S] cluster.</text>
</comment>
<comment type="cofactor">
    <cofactor evidence="1">
        <name>FAD</name>
        <dbReference type="ChEBI" id="CHEBI:57692"/>
    </cofactor>
</comment>
<comment type="subunit">
    <text evidence="1">Composed of six subunits; NqrA, NqrB, NqrC, NqrD, NqrE and NqrF.</text>
</comment>
<comment type="subcellular location">
    <subcellularLocation>
        <location evidence="1">Cell inner membrane</location>
        <topology evidence="1">Single-pass membrane protein</topology>
    </subcellularLocation>
</comment>
<comment type="similarity">
    <text evidence="1">Belongs to the NqrF family.</text>
</comment>
<organism>
    <name type="scientific">Haemophilus influenzae (strain 86-028NP)</name>
    <dbReference type="NCBI Taxonomy" id="281310"/>
    <lineage>
        <taxon>Bacteria</taxon>
        <taxon>Pseudomonadati</taxon>
        <taxon>Pseudomonadota</taxon>
        <taxon>Gammaproteobacteria</taxon>
        <taxon>Pasteurellales</taxon>
        <taxon>Pasteurellaceae</taxon>
        <taxon>Haemophilus</taxon>
    </lineage>
</organism>
<keyword id="KW-0001">2Fe-2S</keyword>
<keyword id="KW-0997">Cell inner membrane</keyword>
<keyword id="KW-1003">Cell membrane</keyword>
<keyword id="KW-0274">FAD</keyword>
<keyword id="KW-0285">Flavoprotein</keyword>
<keyword id="KW-0406">Ion transport</keyword>
<keyword id="KW-0408">Iron</keyword>
<keyword id="KW-0411">Iron-sulfur</keyword>
<keyword id="KW-0472">Membrane</keyword>
<keyword id="KW-0479">Metal-binding</keyword>
<keyword id="KW-0520">NAD</keyword>
<keyword id="KW-0915">Sodium</keyword>
<keyword id="KW-0739">Sodium transport</keyword>
<keyword id="KW-1278">Translocase</keyword>
<keyword id="KW-0812">Transmembrane</keyword>
<keyword id="KW-1133">Transmembrane helix</keyword>
<keyword id="KW-0813">Transport</keyword>
<keyword id="KW-0830">Ubiquinone</keyword>
<protein>
    <recommendedName>
        <fullName evidence="1">Na(+)-translocating NADH-quinone reductase subunit F</fullName>
        <shortName evidence="1">Na(+)-NQR subunit F</shortName>
        <shortName evidence="1">Na(+)-translocating NQR subunit F</shortName>
        <ecNumber evidence="1">7.2.1.1</ecNumber>
    </recommendedName>
    <alternativeName>
        <fullName evidence="1">NQR complex subunit F</fullName>
    </alternativeName>
    <alternativeName>
        <fullName evidence="1">NQR-1 subunit F</fullName>
    </alternativeName>
</protein>
<accession>Q4QP19</accession>
<name>NQRF_HAEI8</name>